<protein>
    <recommendedName>
        <fullName evidence="1">Small ribosomal subunit protein uS11</fullName>
    </recommendedName>
    <alternativeName>
        <fullName evidence="2">30S ribosomal protein S11</fullName>
    </alternativeName>
</protein>
<comment type="function">
    <text evidence="1">Located on the platform of the 30S subunit, it bridges several disparate RNA helices of the 16S rRNA. Forms part of the Shine-Dalgarno cleft in the 70S ribosome.</text>
</comment>
<comment type="subunit">
    <text evidence="1">Part of the 30S ribosomal subunit. Interacts with proteins S7 and S18. Binds to IF-3.</text>
</comment>
<comment type="similarity">
    <text evidence="1">Belongs to the universal ribosomal protein uS11 family.</text>
</comment>
<feature type="chain" id="PRO_1000214375" description="Small ribosomal subunit protein uS11">
    <location>
        <begin position="1"/>
        <end position="130"/>
    </location>
</feature>
<evidence type="ECO:0000255" key="1">
    <source>
        <dbReference type="HAMAP-Rule" id="MF_01310"/>
    </source>
</evidence>
<evidence type="ECO:0000305" key="2"/>
<reference key="1">
    <citation type="journal article" date="2009" name="PLoS ONE">
        <title>The complete genome of Teredinibacter turnerae T7901: an intracellular endosymbiont of marine wood-boring bivalves (shipworms).</title>
        <authorList>
            <person name="Yang J.C."/>
            <person name="Madupu R."/>
            <person name="Durkin A.S."/>
            <person name="Ekborg N.A."/>
            <person name="Pedamallu C.S."/>
            <person name="Hostetler J.B."/>
            <person name="Radune D."/>
            <person name="Toms B.S."/>
            <person name="Henrissat B."/>
            <person name="Coutinho P.M."/>
            <person name="Schwarz S."/>
            <person name="Field L."/>
            <person name="Trindade-Silva A.E."/>
            <person name="Soares C.A.G."/>
            <person name="Elshahawi S."/>
            <person name="Hanora A."/>
            <person name="Schmidt E.W."/>
            <person name="Haygood M.G."/>
            <person name="Posfai J."/>
            <person name="Benner J."/>
            <person name="Madinger C."/>
            <person name="Nove J."/>
            <person name="Anton B."/>
            <person name="Chaudhary K."/>
            <person name="Foster J."/>
            <person name="Holman A."/>
            <person name="Kumar S."/>
            <person name="Lessard P.A."/>
            <person name="Luyten Y.A."/>
            <person name="Slatko B."/>
            <person name="Wood N."/>
            <person name="Wu B."/>
            <person name="Teplitski M."/>
            <person name="Mougous J.D."/>
            <person name="Ward N."/>
            <person name="Eisen J.A."/>
            <person name="Badger J.H."/>
            <person name="Distel D.L."/>
        </authorList>
    </citation>
    <scope>NUCLEOTIDE SEQUENCE [LARGE SCALE GENOMIC DNA]</scope>
    <source>
        <strain>ATCC 39867 / T7901</strain>
    </source>
</reference>
<keyword id="KW-1185">Reference proteome</keyword>
<keyword id="KW-0687">Ribonucleoprotein</keyword>
<keyword id="KW-0689">Ribosomal protein</keyword>
<keyword id="KW-0694">RNA-binding</keyword>
<keyword id="KW-0699">rRNA-binding</keyword>
<organism>
    <name type="scientific">Teredinibacter turnerae (strain ATCC 39867 / T7901)</name>
    <dbReference type="NCBI Taxonomy" id="377629"/>
    <lineage>
        <taxon>Bacteria</taxon>
        <taxon>Pseudomonadati</taxon>
        <taxon>Pseudomonadota</taxon>
        <taxon>Gammaproteobacteria</taxon>
        <taxon>Cellvibrionales</taxon>
        <taxon>Cellvibrionaceae</taxon>
        <taxon>Teredinibacter</taxon>
    </lineage>
</organism>
<dbReference type="EMBL" id="CP001614">
    <property type="protein sequence ID" value="ACR13010.1"/>
    <property type="molecule type" value="Genomic_DNA"/>
</dbReference>
<dbReference type="RefSeq" id="WP_015819123.1">
    <property type="nucleotide sequence ID" value="NC_012997.1"/>
</dbReference>
<dbReference type="SMR" id="C5BQ84"/>
<dbReference type="STRING" id="377629.TERTU_0931"/>
<dbReference type="GeneID" id="58408704"/>
<dbReference type="GeneID" id="93857720"/>
<dbReference type="KEGG" id="ttu:TERTU_0931"/>
<dbReference type="eggNOG" id="COG0100">
    <property type="taxonomic scope" value="Bacteria"/>
</dbReference>
<dbReference type="HOGENOM" id="CLU_072439_5_0_6"/>
<dbReference type="OrthoDB" id="9806415at2"/>
<dbReference type="Proteomes" id="UP000009080">
    <property type="component" value="Chromosome"/>
</dbReference>
<dbReference type="GO" id="GO:1990904">
    <property type="term" value="C:ribonucleoprotein complex"/>
    <property type="evidence" value="ECO:0007669"/>
    <property type="project" value="UniProtKB-KW"/>
</dbReference>
<dbReference type="GO" id="GO:0005840">
    <property type="term" value="C:ribosome"/>
    <property type="evidence" value="ECO:0007669"/>
    <property type="project" value="UniProtKB-KW"/>
</dbReference>
<dbReference type="GO" id="GO:0019843">
    <property type="term" value="F:rRNA binding"/>
    <property type="evidence" value="ECO:0007669"/>
    <property type="project" value="UniProtKB-UniRule"/>
</dbReference>
<dbReference type="GO" id="GO:0003735">
    <property type="term" value="F:structural constituent of ribosome"/>
    <property type="evidence" value="ECO:0007669"/>
    <property type="project" value="InterPro"/>
</dbReference>
<dbReference type="GO" id="GO:0006412">
    <property type="term" value="P:translation"/>
    <property type="evidence" value="ECO:0007669"/>
    <property type="project" value="UniProtKB-UniRule"/>
</dbReference>
<dbReference type="FunFam" id="3.30.420.80:FF:000001">
    <property type="entry name" value="30S ribosomal protein S11"/>
    <property type="match status" value="1"/>
</dbReference>
<dbReference type="Gene3D" id="3.30.420.80">
    <property type="entry name" value="Ribosomal protein S11"/>
    <property type="match status" value="1"/>
</dbReference>
<dbReference type="HAMAP" id="MF_01310">
    <property type="entry name" value="Ribosomal_uS11"/>
    <property type="match status" value="1"/>
</dbReference>
<dbReference type="InterPro" id="IPR001971">
    <property type="entry name" value="Ribosomal_uS11"/>
</dbReference>
<dbReference type="InterPro" id="IPR019981">
    <property type="entry name" value="Ribosomal_uS11_bac-type"/>
</dbReference>
<dbReference type="InterPro" id="IPR018102">
    <property type="entry name" value="Ribosomal_uS11_CS"/>
</dbReference>
<dbReference type="InterPro" id="IPR036967">
    <property type="entry name" value="Ribosomal_uS11_sf"/>
</dbReference>
<dbReference type="NCBIfam" id="NF003698">
    <property type="entry name" value="PRK05309.1"/>
    <property type="match status" value="1"/>
</dbReference>
<dbReference type="NCBIfam" id="TIGR03632">
    <property type="entry name" value="uS11_bact"/>
    <property type="match status" value="1"/>
</dbReference>
<dbReference type="PANTHER" id="PTHR11759">
    <property type="entry name" value="40S RIBOSOMAL PROTEIN S14/30S RIBOSOMAL PROTEIN S11"/>
    <property type="match status" value="1"/>
</dbReference>
<dbReference type="Pfam" id="PF00411">
    <property type="entry name" value="Ribosomal_S11"/>
    <property type="match status" value="1"/>
</dbReference>
<dbReference type="PIRSF" id="PIRSF002131">
    <property type="entry name" value="Ribosomal_S11"/>
    <property type="match status" value="1"/>
</dbReference>
<dbReference type="SUPFAM" id="SSF53137">
    <property type="entry name" value="Translational machinery components"/>
    <property type="match status" value="1"/>
</dbReference>
<dbReference type="PROSITE" id="PS00054">
    <property type="entry name" value="RIBOSOMAL_S11"/>
    <property type="match status" value="1"/>
</dbReference>
<gene>
    <name evidence="1" type="primary">rpsK</name>
    <name type="ordered locus">TERTU_0931</name>
</gene>
<proteinExistence type="inferred from homology"/>
<name>RS11_TERTT</name>
<sequence>MAKPSKTTTKKKVKKTVVDGIAHIHASFNNTIVTITDRQGNTLSWATAGGSGFRGSRKSTPFAAQVAAERAGQAAQEYGLKNLDVEVKGPGPGRESAVRALNNVGYKITNITDVTPIPHNGCRPPKKRRV</sequence>
<accession>C5BQ84</accession>